<evidence type="ECO:0000250" key="1">
    <source>
        <dbReference type="UniProtKB" id="F6VAN0"/>
    </source>
</evidence>
<evidence type="ECO:0000250" key="2">
    <source>
        <dbReference type="UniProtKB" id="P18850"/>
    </source>
</evidence>
<evidence type="ECO:0000255" key="3"/>
<evidence type="ECO:0000255" key="4">
    <source>
        <dbReference type="PROSITE-ProRule" id="PRU00978"/>
    </source>
</evidence>
<evidence type="ECO:0000256" key="5">
    <source>
        <dbReference type="SAM" id="MobiDB-lite"/>
    </source>
</evidence>
<evidence type="ECO:0000269" key="6">
    <source>
    </source>
</evidence>
<evidence type="ECO:0000305" key="7"/>
<feature type="chain" id="PRO_0000424338" description="Cyclic AMP-dependent transcription factor ATF-6 alpha">
    <location>
        <begin position="1"/>
        <end position="656"/>
    </location>
</feature>
<feature type="chain" id="PRO_0000424339" description="Processed cyclic AMP-dependent transcription factor ATF-6 alpha" evidence="2">
    <location>
        <begin position="1"/>
        <end status="unknown"/>
    </location>
</feature>
<feature type="transmembrane region" description="Helical; Signal-anchor for type II membrane protein" evidence="3">
    <location>
        <begin position="378"/>
        <end position="398"/>
    </location>
</feature>
<feature type="topological domain" description="Lumenal" evidence="3">
    <location>
        <begin position="399"/>
        <end position="656"/>
    </location>
</feature>
<feature type="domain" description="bZIP" evidence="4">
    <location>
        <begin position="293"/>
        <end position="356"/>
    </location>
</feature>
<feature type="region of interest" description="Transcription activation" evidence="7">
    <location>
        <begin position="1"/>
        <end position="137"/>
    </location>
</feature>
<feature type="region of interest" description="Disordered" evidence="5">
    <location>
        <begin position="81"/>
        <end position="171"/>
    </location>
</feature>
<feature type="region of interest" description="Basic motif" evidence="4">
    <location>
        <begin position="295"/>
        <end position="326"/>
    </location>
</feature>
<feature type="region of interest" description="Leucine-zipper" evidence="4">
    <location>
        <begin position="335"/>
        <end position="342"/>
    </location>
</feature>
<feature type="region of interest" description="Interaction with THBS4" evidence="2">
    <location>
        <begin position="455"/>
        <end position="575"/>
    </location>
</feature>
<feature type="region of interest" description="Disordered" evidence="5">
    <location>
        <begin position="632"/>
        <end position="656"/>
    </location>
</feature>
<feature type="compositionally biased region" description="Low complexity" evidence="5">
    <location>
        <begin position="81"/>
        <end position="101"/>
    </location>
</feature>
<feature type="compositionally biased region" description="Low complexity" evidence="5">
    <location>
        <begin position="111"/>
        <end position="121"/>
    </location>
</feature>
<feature type="site" description="Cleavage; by MBTPS1" evidence="2">
    <location>
        <begin position="406"/>
        <end position="407"/>
    </location>
</feature>
<feature type="glycosylation site" description="N-linked (GlcNAc...) asparagine" evidence="3">
    <location>
        <position position="459"/>
    </location>
</feature>
<feature type="glycosylation site" description="N-linked (GlcNAc...) asparagine" evidence="3">
    <location>
        <position position="570"/>
    </location>
</feature>
<feature type="glycosylation site" description="N-linked (GlcNAc...) asparagine" evidence="3">
    <location>
        <position position="629"/>
    </location>
</feature>
<feature type="cross-link" description="Glycyl lysine isopeptide (Lys-Gly) (interchain with G-Cter in SUMO2)" evidence="2">
    <location>
        <position position="75"/>
    </location>
</feature>
<feature type="cross-link" description="Glycyl lysine isopeptide (Lys-Gly) (interchain with G-Cter in ubiquitin)" evidence="2">
    <location>
        <position position="139"/>
    </location>
</feature>
<feature type="sequence conflict" description="In Ref. 3; AAI68890." evidence="7" ref="3">
    <original>V</original>
    <variation>G</variation>
    <location>
        <position position="580"/>
    </location>
</feature>
<comment type="function">
    <molecule>Cyclic AMP-dependent transcription factor ATF-6 alpha</molecule>
    <text evidence="2">Precursor of the transcription factor form (Processed cyclic AMP-dependent transcription factor ATF-6 alpha), which is embedded in the endoplasmic reticulum membrane. Endoplasmic reticulum stress promotes processing of this form, releasing the transcription factor form that translocates into the nucleus, where it activates transcription of genes involved in the unfolded protein response (UPR).</text>
</comment>
<comment type="function">
    <molecule>Processed cyclic AMP-dependent transcription factor ATF-6 alpha</molecule>
    <text evidence="2">Transcription factor that initiates the unfolded protein response (UPR) during endoplasmic reticulum stress by activating transcription of genes involved in the UPR. Binds DNA on the 5'-CCAC[GA]-3'half of the ER stress response element (ERSE) (5'-CCAAT-N(9)-CCAC[GA]-3') and of ERSE II (5'-ATTGG-N-CCACG-3'). Binding to ERSE requires binding of NF-Y to ERSE. Could also be involved in activation of transcription by the serum response factor. May play a role in foveal development and cone function in the retina.</text>
</comment>
<comment type="subunit">
    <text evidence="2">Interacts with XBP1 isoform 2; the interaction occurs in a ER stress-dependent manner. Interacts with LACC1.</text>
</comment>
<comment type="subunit">
    <molecule>Cyclic AMP-dependent transcription factor ATF-6 alpha</molecule>
    <text evidence="1 2">Interacts with THBS4 (via EGF-like 3; calcium-binding domain) which facilitates its processing, activation and nuclear translocation (By similarity). Interacts (via lumenal domain) with THBS1 (By similarity).</text>
</comment>
<comment type="subunit">
    <molecule>Processed cyclic AMP-dependent transcription factor ATF-6 alpha</molecule>
    <text evidence="2">Homodimer and heterodimer with ATF6-beta. The dimer interacts with the nuclear transcription factor Y (NF-Y) trimer through direct binding to NF-Y subunit C (NF-YC). Also interacts with the transcription factors GTF2I, YY1 and SRF.</text>
</comment>
<comment type="subcellular location">
    <subcellularLocation>
        <location evidence="6">Endoplasmic reticulum membrane</location>
        <topology evidence="3">Single-pass type II membrane protein</topology>
    </subcellularLocation>
    <subcellularLocation>
        <location evidence="2">Golgi apparatus membrane</location>
        <topology evidence="3">Single-pass type II membrane protein</topology>
    </subcellularLocation>
    <text evidence="2">Translocates from the endoplasmic reticulum to the Golgi, where it is processed.</text>
</comment>
<comment type="subcellular location">
    <molecule>Processed cyclic AMP-dependent transcription factor ATF-6 alpha</molecule>
    <subcellularLocation>
        <location evidence="6">Nucleus</location>
    </subcellularLocation>
    <text evidence="1 6">Under ER stress the cleaved N-terminal cytoplasmic domain translocates into the nucleus (PubMed:22682248). THBS4 promotes its nuclear shuttling (By similarity).</text>
</comment>
<comment type="domain">
    <text evidence="2">The basic domain functions as a nuclear localization signal.</text>
</comment>
<comment type="domain">
    <text evidence="2">The basic leucine-zipper domain is sufficient for association with the NF-Y trimer and binding to ERSE.</text>
</comment>
<comment type="PTM">
    <text evidence="2">During unfolded protein response, a fragment of approximately 50 kDa containing the cytoplasmic transcription factor domain is released by proteolysis. The cleavage seems to be performed sequentially by site-1 (MBTPS1, S1P) and site-2 (MBTPS2, S2P) proteases (By similarity).</text>
</comment>
<comment type="PTM">
    <text evidence="2">N-glycosylated; in its luminal domain (By similarity). The glycosylation status may serve as a sensor for ER homeostasis, resulting in ATF6 activation to trigger the unfolded protein response (UPR) (By similarity).</text>
</comment>
<comment type="PTM">
    <text evidence="2">Ubiquitinated by RNF186 at Lys-139, which is required for pattern recognition receptor-induced unfolded protein response-associated outcomes.</text>
</comment>
<comment type="similarity">
    <text evidence="7">Belongs to the bZIP family. ATF subfamily.</text>
</comment>
<proteinExistence type="evidence at transcript level"/>
<keyword id="KW-0010">Activator</keyword>
<keyword id="KW-0238">DNA-binding</keyword>
<keyword id="KW-0256">Endoplasmic reticulum</keyword>
<keyword id="KW-0325">Glycoprotein</keyword>
<keyword id="KW-0333">Golgi apparatus</keyword>
<keyword id="KW-1017">Isopeptide bond</keyword>
<keyword id="KW-0472">Membrane</keyword>
<keyword id="KW-0539">Nucleus</keyword>
<keyword id="KW-1185">Reference proteome</keyword>
<keyword id="KW-0735">Signal-anchor</keyword>
<keyword id="KW-0804">Transcription</keyword>
<keyword id="KW-0805">Transcription regulation</keyword>
<keyword id="KW-0812">Transmembrane</keyword>
<keyword id="KW-1133">Transmembrane helix</keyword>
<keyword id="KW-0832">Ubl conjugation</keyword>
<keyword id="KW-0834">Unfolded protein response</keyword>
<dbReference type="EMBL" id="AABR06076112">
    <property type="status" value="NOT_ANNOTATED_CDS"/>
    <property type="molecule type" value="Genomic_DNA"/>
</dbReference>
<dbReference type="EMBL" id="AABR06076113">
    <property type="status" value="NOT_ANNOTATED_CDS"/>
    <property type="molecule type" value="Genomic_DNA"/>
</dbReference>
<dbReference type="EMBL" id="AABR06076114">
    <property type="status" value="NOT_ANNOTATED_CDS"/>
    <property type="molecule type" value="Genomic_DNA"/>
</dbReference>
<dbReference type="EMBL" id="AABR06076115">
    <property type="status" value="NOT_ANNOTATED_CDS"/>
    <property type="molecule type" value="Genomic_DNA"/>
</dbReference>
<dbReference type="EMBL" id="AABR06076116">
    <property type="status" value="NOT_ANNOTATED_CDS"/>
    <property type="molecule type" value="Genomic_DNA"/>
</dbReference>
<dbReference type="EMBL" id="CH473958">
    <property type="protein sequence ID" value="EDM09246.1"/>
    <property type="molecule type" value="Genomic_DNA"/>
</dbReference>
<dbReference type="EMBL" id="BC168890">
    <property type="protein sequence ID" value="AAI68890.1"/>
    <property type="molecule type" value="mRNA"/>
</dbReference>
<dbReference type="RefSeq" id="NP_001100666.1">
    <property type="nucleotide sequence ID" value="NM_001107196.1"/>
</dbReference>
<dbReference type="RefSeq" id="XP_063128437.1">
    <property type="nucleotide sequence ID" value="XM_063272367.1"/>
</dbReference>
<dbReference type="SMR" id="G3V909"/>
<dbReference type="FunCoup" id="G3V909">
    <property type="interactions" value="2432"/>
</dbReference>
<dbReference type="STRING" id="10116.ENSRNOP00000032766"/>
<dbReference type="ChEMBL" id="CHEMBL4105716"/>
<dbReference type="GlyCosmos" id="G3V909">
    <property type="glycosylation" value="3 sites, No reported glycans"/>
</dbReference>
<dbReference type="GlyGen" id="G3V909">
    <property type="glycosylation" value="3 sites"/>
</dbReference>
<dbReference type="PhosphoSitePlus" id="G3V909"/>
<dbReference type="PaxDb" id="10116-ENSRNOP00000032766"/>
<dbReference type="GeneID" id="304962"/>
<dbReference type="KEGG" id="rno:304962"/>
<dbReference type="AGR" id="RGD:1305471"/>
<dbReference type="CTD" id="22926"/>
<dbReference type="RGD" id="1305471">
    <property type="gene designation" value="Atf6"/>
</dbReference>
<dbReference type="VEuPathDB" id="HostDB:ENSRNOG00000024632"/>
<dbReference type="eggNOG" id="KOG4343">
    <property type="taxonomic scope" value="Eukaryota"/>
</dbReference>
<dbReference type="HOGENOM" id="CLU_026136_1_0_1"/>
<dbReference type="InParanoid" id="G3V909"/>
<dbReference type="OrthoDB" id="644067at2759"/>
<dbReference type="PhylomeDB" id="G3V909"/>
<dbReference type="TreeFam" id="TF316079"/>
<dbReference type="Reactome" id="R-RNO-381033">
    <property type="pathway name" value="ATF6 (ATF6-alpha) activates chaperones"/>
</dbReference>
<dbReference type="PRO" id="PR:G3V909"/>
<dbReference type="Proteomes" id="UP000002494">
    <property type="component" value="Chromosome 13"/>
</dbReference>
<dbReference type="Proteomes" id="UP000234681">
    <property type="component" value="Chromosome 13"/>
</dbReference>
<dbReference type="Bgee" id="ENSRNOG00000024632">
    <property type="expression patterns" value="Expressed in liver and 19 other cell types or tissues"/>
</dbReference>
<dbReference type="GO" id="GO:0005783">
    <property type="term" value="C:endoplasmic reticulum"/>
    <property type="evidence" value="ECO:0000266"/>
    <property type="project" value="RGD"/>
</dbReference>
<dbReference type="GO" id="GO:0005789">
    <property type="term" value="C:endoplasmic reticulum membrane"/>
    <property type="evidence" value="ECO:0000266"/>
    <property type="project" value="RGD"/>
</dbReference>
<dbReference type="GO" id="GO:0005794">
    <property type="term" value="C:Golgi apparatus"/>
    <property type="evidence" value="ECO:0000266"/>
    <property type="project" value="RGD"/>
</dbReference>
<dbReference type="GO" id="GO:0000139">
    <property type="term" value="C:Golgi membrane"/>
    <property type="evidence" value="ECO:0007669"/>
    <property type="project" value="UniProtKB-SubCell"/>
</dbReference>
<dbReference type="GO" id="GO:0016020">
    <property type="term" value="C:membrane"/>
    <property type="evidence" value="ECO:0000266"/>
    <property type="project" value="RGD"/>
</dbReference>
<dbReference type="GO" id="GO:0005634">
    <property type="term" value="C:nucleus"/>
    <property type="evidence" value="ECO:0000314"/>
    <property type="project" value="UniProtKB"/>
</dbReference>
<dbReference type="GO" id="GO:0090575">
    <property type="term" value="C:RNA polymerase II transcription regulator complex"/>
    <property type="evidence" value="ECO:0000266"/>
    <property type="project" value="RGD"/>
</dbReference>
<dbReference type="GO" id="GO:0001228">
    <property type="term" value="F:DNA-binding transcription activator activity, RNA polymerase II-specific"/>
    <property type="evidence" value="ECO:0000266"/>
    <property type="project" value="RGD"/>
</dbReference>
<dbReference type="GO" id="GO:0003700">
    <property type="term" value="F:DNA-binding transcription factor activity"/>
    <property type="evidence" value="ECO:0000266"/>
    <property type="project" value="RGD"/>
</dbReference>
<dbReference type="GO" id="GO:0000981">
    <property type="term" value="F:DNA-binding transcription factor activity, RNA polymerase II-specific"/>
    <property type="evidence" value="ECO:0000318"/>
    <property type="project" value="GO_Central"/>
</dbReference>
<dbReference type="GO" id="GO:0019899">
    <property type="term" value="F:enzyme binding"/>
    <property type="evidence" value="ECO:0000266"/>
    <property type="project" value="RGD"/>
</dbReference>
<dbReference type="GO" id="GO:0042802">
    <property type="term" value="F:identical protein binding"/>
    <property type="evidence" value="ECO:0000266"/>
    <property type="project" value="RGD"/>
</dbReference>
<dbReference type="GO" id="GO:0046982">
    <property type="term" value="F:protein heterodimerization activity"/>
    <property type="evidence" value="ECO:0000266"/>
    <property type="project" value="RGD"/>
</dbReference>
<dbReference type="GO" id="GO:0000978">
    <property type="term" value="F:RNA polymerase II cis-regulatory region sequence-specific DNA binding"/>
    <property type="evidence" value="ECO:0000266"/>
    <property type="project" value="RGD"/>
</dbReference>
<dbReference type="GO" id="GO:0000977">
    <property type="term" value="F:RNA polymerase II transcription regulatory region sequence-specific DNA binding"/>
    <property type="evidence" value="ECO:0000250"/>
    <property type="project" value="UniProtKB"/>
</dbReference>
<dbReference type="GO" id="GO:0043565">
    <property type="term" value="F:sequence-specific DNA binding"/>
    <property type="evidence" value="ECO:0000266"/>
    <property type="project" value="RGD"/>
</dbReference>
<dbReference type="GO" id="GO:1990837">
    <property type="term" value="F:sequence-specific double-stranded DNA binding"/>
    <property type="evidence" value="ECO:0000266"/>
    <property type="project" value="RGD"/>
</dbReference>
<dbReference type="GO" id="GO:0000976">
    <property type="term" value="F:transcription cis-regulatory region binding"/>
    <property type="evidence" value="ECO:0000266"/>
    <property type="project" value="RGD"/>
</dbReference>
<dbReference type="GO" id="GO:0031625">
    <property type="term" value="F:ubiquitin protein ligase binding"/>
    <property type="evidence" value="ECO:0000353"/>
    <property type="project" value="ParkinsonsUK-UCL"/>
</dbReference>
<dbReference type="GO" id="GO:0030968">
    <property type="term" value="P:endoplasmic reticulum unfolded protein response"/>
    <property type="evidence" value="ECO:0000318"/>
    <property type="project" value="GO_Central"/>
</dbReference>
<dbReference type="GO" id="GO:0001654">
    <property type="term" value="P:eye development"/>
    <property type="evidence" value="ECO:0000266"/>
    <property type="project" value="RGD"/>
</dbReference>
<dbReference type="GO" id="GO:0043065">
    <property type="term" value="P:positive regulation of apoptotic process"/>
    <property type="evidence" value="ECO:0000266"/>
    <property type="project" value="RGD"/>
</dbReference>
<dbReference type="GO" id="GO:1903893">
    <property type="term" value="P:positive regulation of ATF6-mediated unfolded protein response"/>
    <property type="evidence" value="ECO:0000266"/>
    <property type="project" value="RGD"/>
</dbReference>
<dbReference type="GO" id="GO:0010508">
    <property type="term" value="P:positive regulation of autophagy"/>
    <property type="evidence" value="ECO:0000266"/>
    <property type="project" value="RGD"/>
</dbReference>
<dbReference type="GO" id="GO:0045944">
    <property type="term" value="P:positive regulation of transcription by RNA polymerase II"/>
    <property type="evidence" value="ECO:0000266"/>
    <property type="project" value="RGD"/>
</dbReference>
<dbReference type="GO" id="GO:0006357">
    <property type="term" value="P:regulation of transcription by RNA polymerase II"/>
    <property type="evidence" value="ECO:0000318"/>
    <property type="project" value="GO_Central"/>
</dbReference>
<dbReference type="GO" id="GO:0034976">
    <property type="term" value="P:response to endoplasmic reticulum stress"/>
    <property type="evidence" value="ECO:0000266"/>
    <property type="project" value="RGD"/>
</dbReference>
<dbReference type="GO" id="GO:0007601">
    <property type="term" value="P:visual perception"/>
    <property type="evidence" value="ECO:0000266"/>
    <property type="project" value="RGD"/>
</dbReference>
<dbReference type="CDD" id="cd14700">
    <property type="entry name" value="bZIP_ATF6"/>
    <property type="match status" value="1"/>
</dbReference>
<dbReference type="FunFam" id="1.20.5.170:FF:000041">
    <property type="entry name" value="Cyclic AMP-dependent transcription factor ATF-6 beta"/>
    <property type="match status" value="1"/>
</dbReference>
<dbReference type="Gene3D" id="1.20.5.170">
    <property type="match status" value="1"/>
</dbReference>
<dbReference type="InterPro" id="IPR051882">
    <property type="entry name" value="ATF_bZIP_TF"/>
</dbReference>
<dbReference type="InterPro" id="IPR004827">
    <property type="entry name" value="bZIP"/>
</dbReference>
<dbReference type="InterPro" id="IPR046347">
    <property type="entry name" value="bZIP_sf"/>
</dbReference>
<dbReference type="PANTHER" id="PTHR46164">
    <property type="entry name" value="ATF6, ISOFORM C"/>
    <property type="match status" value="1"/>
</dbReference>
<dbReference type="PANTHER" id="PTHR46164:SF1">
    <property type="entry name" value="CYCLIC AMP-DEPENDENT TRANSCRIPTION FACTOR ATF-6 ALPHA"/>
    <property type="match status" value="1"/>
</dbReference>
<dbReference type="Pfam" id="PF00170">
    <property type="entry name" value="bZIP_1"/>
    <property type="match status" value="1"/>
</dbReference>
<dbReference type="SMART" id="SM00338">
    <property type="entry name" value="BRLZ"/>
    <property type="match status" value="1"/>
</dbReference>
<dbReference type="SUPFAM" id="SSF57959">
    <property type="entry name" value="Leucine zipper domain"/>
    <property type="match status" value="1"/>
</dbReference>
<dbReference type="PROSITE" id="PS50217">
    <property type="entry name" value="BZIP"/>
    <property type="match status" value="1"/>
</dbReference>
<dbReference type="PROSITE" id="PS00036">
    <property type="entry name" value="BZIP_BASIC"/>
    <property type="match status" value="1"/>
</dbReference>
<name>ATF6A_RAT</name>
<protein>
    <recommendedName>
        <fullName>Cyclic AMP-dependent transcription factor ATF-6 alpha</fullName>
        <shortName>cAMP-dependent transcription factor ATF-6 alpha</shortName>
    </recommendedName>
    <alternativeName>
        <fullName>Activating transcription factor 6 alpha</fullName>
        <shortName>ATF6-alpha</shortName>
    </alternativeName>
    <component>
        <recommendedName>
            <fullName>Processed cyclic AMP-dependent transcription factor ATF-6 alpha</fullName>
        </recommendedName>
    </component>
</protein>
<organism>
    <name type="scientific">Rattus norvegicus</name>
    <name type="common">Rat</name>
    <dbReference type="NCBI Taxonomy" id="10116"/>
    <lineage>
        <taxon>Eukaryota</taxon>
        <taxon>Metazoa</taxon>
        <taxon>Chordata</taxon>
        <taxon>Craniata</taxon>
        <taxon>Vertebrata</taxon>
        <taxon>Euteleostomi</taxon>
        <taxon>Mammalia</taxon>
        <taxon>Eutheria</taxon>
        <taxon>Euarchontoglires</taxon>
        <taxon>Glires</taxon>
        <taxon>Rodentia</taxon>
        <taxon>Myomorpha</taxon>
        <taxon>Muroidea</taxon>
        <taxon>Muridae</taxon>
        <taxon>Murinae</taxon>
        <taxon>Rattus</taxon>
    </lineage>
</organism>
<gene>
    <name type="primary">Atf6</name>
</gene>
<accession>G3V909</accession>
<accession>B5DF18</accession>
<sequence>MESPFSPVLPHGPGEDWESTLFAELGYFTDTDDVQFDAAHETYENNFDHLNFDLDLMPWESDIWSPSSHFCSDIKAEPQPLSPASSSCSVSSPRSTDSCSSTQHVPEELDLLSSSQSPLSLYGDSCHSPSSAEPLKEEKPVTGPGNKTEHGLTPKKKIQMSSKPSVQPKPLLLPAAPKTPANASVPAKTIIIQTLPALMPLAKQQSIISIQPAPTKGQTVLLSQPAVVQLQTPGVLPSAQPVLAVTGGATQLPNHVVNVVPAPVVNSPVNGKLCVTKPVLQSSTRSTGSDIAVLRRQQRMIKNRESACQSRKKKKEYMLGLEARLKAALSENEQLKKENGSLKRQLDQVVSENQRLKVPSPKRRAVCVMIVLAFIMLNYGPMSMLEQDSRRVKPSVSPANQRRHLLEFSAKEVKDTSDGDNQKNSYRYDHSVSNDKALMVLSEEPLLYIPPPPCQPLINTTESLRLNHELRGWVHRHEVERTKSRRMTNSQQKTRILQGALEQGSNSQLMAVQYTETTSISRNSGSELQVYYASPGSYQGFFDAIRRRGDTFYVVSFRRDHLLLPATTHNKTTRPKMSIVLPAININDNVINGQDYEVMMQIDCQVMDTRILHIKSSSVPPYLRDHQRNQTSTFFGSPPTATETTHVVSTLPESVQ</sequence>
<reference key="1">
    <citation type="journal article" date="2004" name="Nature">
        <title>Genome sequence of the Brown Norway rat yields insights into mammalian evolution.</title>
        <authorList>
            <person name="Gibbs R.A."/>
            <person name="Weinstock G.M."/>
            <person name="Metzker M.L."/>
            <person name="Muzny D.M."/>
            <person name="Sodergren E.J."/>
            <person name="Scherer S."/>
            <person name="Scott G."/>
            <person name="Steffen D."/>
            <person name="Worley K.C."/>
            <person name="Burch P.E."/>
            <person name="Okwuonu G."/>
            <person name="Hines S."/>
            <person name="Lewis L."/>
            <person name="Deramo C."/>
            <person name="Delgado O."/>
            <person name="Dugan-Rocha S."/>
            <person name="Miner G."/>
            <person name="Morgan M."/>
            <person name="Hawes A."/>
            <person name="Gill R."/>
            <person name="Holt R.A."/>
            <person name="Adams M.D."/>
            <person name="Amanatides P.G."/>
            <person name="Baden-Tillson H."/>
            <person name="Barnstead M."/>
            <person name="Chin S."/>
            <person name="Evans C.A."/>
            <person name="Ferriera S."/>
            <person name="Fosler C."/>
            <person name="Glodek A."/>
            <person name="Gu Z."/>
            <person name="Jennings D."/>
            <person name="Kraft C.L."/>
            <person name="Nguyen T."/>
            <person name="Pfannkoch C.M."/>
            <person name="Sitter C."/>
            <person name="Sutton G.G."/>
            <person name="Venter J.C."/>
            <person name="Woodage T."/>
            <person name="Smith D."/>
            <person name="Lee H.-M."/>
            <person name="Gustafson E."/>
            <person name="Cahill P."/>
            <person name="Kana A."/>
            <person name="Doucette-Stamm L."/>
            <person name="Weinstock K."/>
            <person name="Fechtel K."/>
            <person name="Weiss R.B."/>
            <person name="Dunn D.M."/>
            <person name="Green E.D."/>
            <person name="Blakesley R.W."/>
            <person name="Bouffard G.G."/>
            <person name="De Jong P.J."/>
            <person name="Osoegawa K."/>
            <person name="Zhu B."/>
            <person name="Marra M."/>
            <person name="Schein J."/>
            <person name="Bosdet I."/>
            <person name="Fjell C."/>
            <person name="Jones S."/>
            <person name="Krzywinski M."/>
            <person name="Mathewson C."/>
            <person name="Siddiqui A."/>
            <person name="Wye N."/>
            <person name="McPherson J."/>
            <person name="Zhao S."/>
            <person name="Fraser C.M."/>
            <person name="Shetty J."/>
            <person name="Shatsman S."/>
            <person name="Geer K."/>
            <person name="Chen Y."/>
            <person name="Abramzon S."/>
            <person name="Nierman W.C."/>
            <person name="Havlak P.H."/>
            <person name="Chen R."/>
            <person name="Durbin K.J."/>
            <person name="Egan A."/>
            <person name="Ren Y."/>
            <person name="Song X.-Z."/>
            <person name="Li B."/>
            <person name="Liu Y."/>
            <person name="Qin X."/>
            <person name="Cawley S."/>
            <person name="Cooney A.J."/>
            <person name="D'Souza L.M."/>
            <person name="Martin K."/>
            <person name="Wu J.Q."/>
            <person name="Gonzalez-Garay M.L."/>
            <person name="Jackson A.R."/>
            <person name="Kalafus K.J."/>
            <person name="McLeod M.P."/>
            <person name="Milosavljevic A."/>
            <person name="Virk D."/>
            <person name="Volkov A."/>
            <person name="Wheeler D.A."/>
            <person name="Zhang Z."/>
            <person name="Bailey J.A."/>
            <person name="Eichler E.E."/>
            <person name="Tuzun E."/>
            <person name="Birney E."/>
            <person name="Mongin E."/>
            <person name="Ureta-Vidal A."/>
            <person name="Woodwark C."/>
            <person name="Zdobnov E."/>
            <person name="Bork P."/>
            <person name="Suyama M."/>
            <person name="Torrents D."/>
            <person name="Alexandersson M."/>
            <person name="Trask B.J."/>
            <person name="Young J.M."/>
            <person name="Huang H."/>
            <person name="Wang H."/>
            <person name="Xing H."/>
            <person name="Daniels S."/>
            <person name="Gietzen D."/>
            <person name="Schmidt J."/>
            <person name="Stevens K."/>
            <person name="Vitt U."/>
            <person name="Wingrove J."/>
            <person name="Camara F."/>
            <person name="Mar Alba M."/>
            <person name="Abril J.F."/>
            <person name="Guigo R."/>
            <person name="Smit A."/>
            <person name="Dubchak I."/>
            <person name="Rubin E.M."/>
            <person name="Couronne O."/>
            <person name="Poliakov A."/>
            <person name="Huebner N."/>
            <person name="Ganten D."/>
            <person name="Goesele C."/>
            <person name="Hummel O."/>
            <person name="Kreitler T."/>
            <person name="Lee Y.-A."/>
            <person name="Monti J."/>
            <person name="Schulz H."/>
            <person name="Zimdahl H."/>
            <person name="Himmelbauer H."/>
            <person name="Lehrach H."/>
            <person name="Jacob H.J."/>
            <person name="Bromberg S."/>
            <person name="Gullings-Handley J."/>
            <person name="Jensen-Seaman M.I."/>
            <person name="Kwitek A.E."/>
            <person name="Lazar J."/>
            <person name="Pasko D."/>
            <person name="Tonellato P.J."/>
            <person name="Twigger S."/>
            <person name="Ponting C.P."/>
            <person name="Duarte J.M."/>
            <person name="Rice S."/>
            <person name="Goodstadt L."/>
            <person name="Beatson S.A."/>
            <person name="Emes R.D."/>
            <person name="Winter E.E."/>
            <person name="Webber C."/>
            <person name="Brandt P."/>
            <person name="Nyakatura G."/>
            <person name="Adetobi M."/>
            <person name="Chiaromonte F."/>
            <person name="Elnitski L."/>
            <person name="Eswara P."/>
            <person name="Hardison R.C."/>
            <person name="Hou M."/>
            <person name="Kolbe D."/>
            <person name="Makova K."/>
            <person name="Miller W."/>
            <person name="Nekrutenko A."/>
            <person name="Riemer C."/>
            <person name="Schwartz S."/>
            <person name="Taylor J."/>
            <person name="Yang S."/>
            <person name="Zhang Y."/>
            <person name="Lindpaintner K."/>
            <person name="Andrews T.D."/>
            <person name="Caccamo M."/>
            <person name="Clamp M."/>
            <person name="Clarke L."/>
            <person name="Curwen V."/>
            <person name="Durbin R.M."/>
            <person name="Eyras E."/>
            <person name="Searle S.M."/>
            <person name="Cooper G.M."/>
            <person name="Batzoglou S."/>
            <person name="Brudno M."/>
            <person name="Sidow A."/>
            <person name="Stone E.A."/>
            <person name="Payseur B.A."/>
            <person name="Bourque G."/>
            <person name="Lopez-Otin C."/>
            <person name="Puente X.S."/>
            <person name="Chakrabarti K."/>
            <person name="Chatterji S."/>
            <person name="Dewey C."/>
            <person name="Pachter L."/>
            <person name="Bray N."/>
            <person name="Yap V.B."/>
            <person name="Caspi A."/>
            <person name="Tesler G."/>
            <person name="Pevzner P.A."/>
            <person name="Haussler D."/>
            <person name="Roskin K.M."/>
            <person name="Baertsch R."/>
            <person name="Clawson H."/>
            <person name="Furey T.S."/>
            <person name="Hinrichs A.S."/>
            <person name="Karolchik D."/>
            <person name="Kent W.J."/>
            <person name="Rosenbloom K.R."/>
            <person name="Trumbower H."/>
            <person name="Weirauch M."/>
            <person name="Cooper D.N."/>
            <person name="Stenson P.D."/>
            <person name="Ma B."/>
            <person name="Brent M."/>
            <person name="Arumugam M."/>
            <person name="Shteynberg D."/>
            <person name="Copley R.R."/>
            <person name="Taylor M.S."/>
            <person name="Riethman H."/>
            <person name="Mudunuri U."/>
            <person name="Peterson J."/>
            <person name="Guyer M."/>
            <person name="Felsenfeld A."/>
            <person name="Old S."/>
            <person name="Mockrin S."/>
            <person name="Collins F.S."/>
        </authorList>
    </citation>
    <scope>NUCLEOTIDE SEQUENCE [LARGE SCALE GENOMIC DNA]</scope>
    <source>
        <strain>Brown Norway</strain>
    </source>
</reference>
<reference key="2">
    <citation type="submission" date="2005-09" db="EMBL/GenBank/DDBJ databases">
        <authorList>
            <person name="Mural R.J."/>
            <person name="Adams M.D."/>
            <person name="Myers E.W."/>
            <person name="Smith H.O."/>
            <person name="Venter J.C."/>
        </authorList>
    </citation>
    <scope>NUCLEOTIDE SEQUENCE [LARGE SCALE GENOMIC DNA]</scope>
    <source>
        <strain>Brown Norway</strain>
    </source>
</reference>
<reference key="3">
    <citation type="journal article" date="2004" name="Genome Res.">
        <title>The status, quality, and expansion of the NIH full-length cDNA project: the Mammalian Gene Collection (MGC).</title>
        <authorList>
            <consortium name="The MGC Project Team"/>
        </authorList>
    </citation>
    <scope>NUCLEOTIDE SEQUENCE [LARGE SCALE MRNA]</scope>
    <source>
        <tissue>Kidney</tissue>
    </source>
</reference>
<reference key="4">
    <citation type="journal article" date="2012" name="Cell">
        <title>A thrombospondin-dependent pathway for a protective ER stress response.</title>
        <authorList>
            <person name="Lynch J.M."/>
            <person name="Maillet M."/>
            <person name="Vanhoutte D."/>
            <person name="Schloemer A."/>
            <person name="Sargent M.A."/>
            <person name="Blair N.S."/>
            <person name="Lynch K.A."/>
            <person name="Okada T."/>
            <person name="Aronow B.J."/>
            <person name="Osinska H."/>
            <person name="Prywes R."/>
            <person name="Lorenz J.N."/>
            <person name="Mori K."/>
            <person name="Lawler J."/>
            <person name="Robbins J."/>
            <person name="Molkentin J.D."/>
        </authorList>
    </citation>
    <scope>SUBCELLULAR LOCATION</scope>
</reference>